<name>HYPD_RHILV</name>
<dbReference type="EMBL" id="X52974">
    <property type="protein sequence ID" value="CAA37163.1"/>
    <property type="molecule type" value="Genomic_DNA"/>
</dbReference>
<dbReference type="PIR" id="S32877">
    <property type="entry name" value="S32877"/>
</dbReference>
<dbReference type="SMR" id="P40598"/>
<dbReference type="UniPathway" id="UPA00335"/>
<dbReference type="GO" id="GO:0051539">
    <property type="term" value="F:4 iron, 4 sulfur cluster binding"/>
    <property type="evidence" value="ECO:0007669"/>
    <property type="project" value="UniProtKB-KW"/>
</dbReference>
<dbReference type="GO" id="GO:0070025">
    <property type="term" value="F:carbon monoxide binding"/>
    <property type="evidence" value="ECO:0007669"/>
    <property type="project" value="TreeGrafter"/>
</dbReference>
<dbReference type="GO" id="GO:0005506">
    <property type="term" value="F:iron ion binding"/>
    <property type="evidence" value="ECO:0007669"/>
    <property type="project" value="TreeGrafter"/>
</dbReference>
<dbReference type="GO" id="GO:0051604">
    <property type="term" value="P:protein maturation"/>
    <property type="evidence" value="ECO:0007669"/>
    <property type="project" value="TreeGrafter"/>
</dbReference>
<dbReference type="Gene3D" id="6.10.20.100">
    <property type="match status" value="1"/>
</dbReference>
<dbReference type="Gene3D" id="3.40.50.11740">
    <property type="entry name" value="HypD, alpha/beta domain 2"/>
    <property type="match status" value="2"/>
</dbReference>
<dbReference type="InterPro" id="IPR002780">
    <property type="entry name" value="Hyd_form_HypD"/>
</dbReference>
<dbReference type="InterPro" id="IPR042243">
    <property type="entry name" value="HypD_1"/>
</dbReference>
<dbReference type="InterPro" id="IPR042244">
    <property type="entry name" value="HypD_2_sf"/>
</dbReference>
<dbReference type="NCBIfam" id="TIGR00075">
    <property type="entry name" value="hypD"/>
    <property type="match status" value="1"/>
</dbReference>
<dbReference type="PANTHER" id="PTHR30149:SF0">
    <property type="entry name" value="HYDROGENASE MATURATION FACTOR HYPD"/>
    <property type="match status" value="1"/>
</dbReference>
<dbReference type="PANTHER" id="PTHR30149">
    <property type="entry name" value="HYDROGENASE PROTEIN ASSEMBLY PROTEIN HYPD"/>
    <property type="match status" value="1"/>
</dbReference>
<dbReference type="Pfam" id="PF01924">
    <property type="entry name" value="HypD"/>
    <property type="match status" value="1"/>
</dbReference>
<dbReference type="PIRSF" id="PIRSF005622">
    <property type="entry name" value="Hydrgn_mat_hypD"/>
    <property type="match status" value="1"/>
</dbReference>
<sequence length="385" mass="42028">MKYIDEYRDGSLAKDVARQITALADPARSYHFMEFCGGHTHAISRYGLEDLLPANVRMIHGPGCPVCVLPIGRIDAAIALAMRPEITLCTYGDLMRVPGSNGSSLLKAKAAGADIRMVYSTLDALRIADAEPDREVVFFAIGFETTTPTTALALKAAIARGLGNFSIFCNHVLTPAPIQNILESPDVRKLGTIKIDGFIGPAHVSTVIGTEPYEFFAEEFRKPVVVAGFEPLDVIQAILMLVRQVNDGRHEVENQYIRAVTALGNEKAQAEVANFFELRESFEWRGLGEVPYGALRLRPQYAAYDAEKRFSMVTPAAKDNPACECGAILRGVKKPADCKLFGTVCTPDTPMGSCMVSPEGACAAHWAYGRFREKVRQVDARRAVA</sequence>
<comment type="function">
    <text evidence="1">Involved in the maturation of [NiFe] hydrogenases. Involved in the biosynthesis of the Fe(CN)(2)CO cofactor.</text>
</comment>
<comment type="cofactor">
    <cofactor evidence="1">
        <name>[4Fe-4S] cluster</name>
        <dbReference type="ChEBI" id="CHEBI:49883"/>
    </cofactor>
</comment>
<comment type="pathway">
    <text evidence="1">Protein modification; [NiFe] hydrogenase maturation.</text>
</comment>
<comment type="similarity">
    <text evidence="2">Belongs to the HypD family.</text>
</comment>
<protein>
    <recommendedName>
        <fullName evidence="1">Hydrogenase maturation factor HypD</fullName>
    </recommendedName>
</protein>
<reference key="1">
    <citation type="journal article" date="1993" name="Mol. Microbiol.">
        <title>Molecular analysis of a microaerobically induced operon required for hydrogenase synthesis in Rhizobium leguminosarum biovar viciae.</title>
        <authorList>
            <person name="Rey L."/>
            <person name="Murillo J."/>
            <person name="Hernando Y."/>
            <person name="Hidalgo E."/>
            <person name="Cabrera E."/>
            <person name="Imperial J."/>
            <person name="Ruiz-Argueso T."/>
        </authorList>
    </citation>
    <scope>NUCLEOTIDE SEQUENCE [GENOMIC DNA]</scope>
    <source>
        <strain>128c53</strain>
    </source>
</reference>
<accession>P40598</accession>
<organism>
    <name type="scientific">Rhizobium leguminosarum bv. viciae</name>
    <dbReference type="NCBI Taxonomy" id="387"/>
    <lineage>
        <taxon>Bacteria</taxon>
        <taxon>Pseudomonadati</taxon>
        <taxon>Pseudomonadota</taxon>
        <taxon>Alphaproteobacteria</taxon>
        <taxon>Hyphomicrobiales</taxon>
        <taxon>Rhizobiaceae</taxon>
        <taxon>Rhizobium/Agrobacterium group</taxon>
        <taxon>Rhizobium</taxon>
    </lineage>
</organism>
<evidence type="ECO:0000250" key="1">
    <source>
        <dbReference type="UniProtKB" id="P24192"/>
    </source>
</evidence>
<evidence type="ECO:0000305" key="2"/>
<keyword id="KW-0004">4Fe-4S</keyword>
<keyword id="KW-0408">Iron</keyword>
<keyword id="KW-0411">Iron-sulfur</keyword>
<keyword id="KW-0479">Metal-binding</keyword>
<gene>
    <name type="primary">hypD</name>
</gene>
<proteinExistence type="inferred from homology"/>
<feature type="chain" id="PRO_0000201452" description="Hydrogenase maturation factor HypD">
    <location>
        <begin position="1"/>
        <end position="385"/>
    </location>
</feature>
<feature type="binding site" evidence="1">
    <location>
        <position position="36"/>
    </location>
    <ligand>
        <name>Fe cation</name>
        <dbReference type="ChEBI" id="CHEBI:24875"/>
    </ligand>
</feature>
<feature type="binding site" evidence="1">
    <location>
        <position position="64"/>
    </location>
    <ligand>
        <name>Fe cation</name>
        <dbReference type="ChEBI" id="CHEBI:24875"/>
    </ligand>
</feature>
<feature type="binding site" evidence="1">
    <location>
        <position position="67"/>
    </location>
    <ligand>
        <name>Fe cation</name>
        <dbReference type="ChEBI" id="CHEBI:24875"/>
    </ligand>
</feature>